<sequence length="93" mass="10682">MANNKSAQKRIQVNERNRLQNRFYKSSVRTLIKVFLKNLEIYKTSKSPEGKEKLQKILSSVYSLIDKGTKKNVFHKNAAARKKAKLASSLKIS</sequence>
<gene>
    <name evidence="1" type="primary">rps20</name>
</gene>
<protein>
    <recommendedName>
        <fullName evidence="1">Small ribosomal subunit protein bS20c</fullName>
    </recommendedName>
    <alternativeName>
        <fullName evidence="2">30S ribosomal protein S20, chloroplastic</fullName>
    </alternativeName>
</protein>
<keyword id="KW-0150">Chloroplast</keyword>
<keyword id="KW-0934">Plastid</keyword>
<keyword id="KW-1185">Reference proteome</keyword>
<keyword id="KW-0687">Ribonucleoprotein</keyword>
<keyword id="KW-0689">Ribosomal protein</keyword>
<keyword id="KW-0694">RNA-binding</keyword>
<keyword id="KW-0699">rRNA-binding</keyword>
<comment type="function">
    <text evidence="1">Binds directly to 16S ribosomal RNA.</text>
</comment>
<comment type="subcellular location">
    <subcellularLocation>
        <location>Plastid</location>
        <location>Chloroplast</location>
    </subcellularLocation>
</comment>
<comment type="similarity">
    <text evidence="1">Belongs to the bacterial ribosomal protein bS20 family.</text>
</comment>
<accession>A0T0D6</accession>
<name>RR20_PHATC</name>
<dbReference type="EMBL" id="EF067920">
    <property type="protein sequence ID" value="ABK20634.1"/>
    <property type="molecule type" value="Genomic_DNA"/>
</dbReference>
<dbReference type="RefSeq" id="YP_874411.1">
    <property type="nucleotide sequence ID" value="NC_008588.1"/>
</dbReference>
<dbReference type="SMR" id="A0T0D6"/>
<dbReference type="STRING" id="556484.A0T0D6"/>
<dbReference type="GeneID" id="4524586"/>
<dbReference type="InParanoid" id="A0T0D6"/>
<dbReference type="Proteomes" id="UP000000759">
    <property type="component" value="Chloroplast"/>
</dbReference>
<dbReference type="GO" id="GO:0009507">
    <property type="term" value="C:chloroplast"/>
    <property type="evidence" value="ECO:0007669"/>
    <property type="project" value="UniProtKB-SubCell"/>
</dbReference>
<dbReference type="GO" id="GO:0015935">
    <property type="term" value="C:small ribosomal subunit"/>
    <property type="evidence" value="ECO:0007669"/>
    <property type="project" value="TreeGrafter"/>
</dbReference>
<dbReference type="GO" id="GO:0070181">
    <property type="term" value="F:small ribosomal subunit rRNA binding"/>
    <property type="evidence" value="ECO:0007669"/>
    <property type="project" value="TreeGrafter"/>
</dbReference>
<dbReference type="GO" id="GO:0003735">
    <property type="term" value="F:structural constituent of ribosome"/>
    <property type="evidence" value="ECO:0007669"/>
    <property type="project" value="InterPro"/>
</dbReference>
<dbReference type="GO" id="GO:0006412">
    <property type="term" value="P:translation"/>
    <property type="evidence" value="ECO:0007669"/>
    <property type="project" value="UniProtKB-UniRule"/>
</dbReference>
<dbReference type="FunFam" id="1.20.58.110:FF:000001">
    <property type="entry name" value="30S ribosomal protein S20"/>
    <property type="match status" value="1"/>
</dbReference>
<dbReference type="Gene3D" id="1.20.58.110">
    <property type="entry name" value="Ribosomal protein S20"/>
    <property type="match status" value="1"/>
</dbReference>
<dbReference type="HAMAP" id="MF_00500">
    <property type="entry name" value="Ribosomal_bS20"/>
    <property type="match status" value="1"/>
</dbReference>
<dbReference type="InterPro" id="IPR002583">
    <property type="entry name" value="Ribosomal_bS20"/>
</dbReference>
<dbReference type="InterPro" id="IPR036510">
    <property type="entry name" value="Ribosomal_bS20_sf"/>
</dbReference>
<dbReference type="NCBIfam" id="TIGR00029">
    <property type="entry name" value="S20"/>
    <property type="match status" value="1"/>
</dbReference>
<dbReference type="PANTHER" id="PTHR33398">
    <property type="entry name" value="30S RIBOSOMAL PROTEIN S20"/>
    <property type="match status" value="1"/>
</dbReference>
<dbReference type="PANTHER" id="PTHR33398:SF1">
    <property type="entry name" value="SMALL RIBOSOMAL SUBUNIT PROTEIN BS20C"/>
    <property type="match status" value="1"/>
</dbReference>
<dbReference type="Pfam" id="PF01649">
    <property type="entry name" value="Ribosomal_S20p"/>
    <property type="match status" value="1"/>
</dbReference>
<dbReference type="SUPFAM" id="SSF46992">
    <property type="entry name" value="Ribosomal protein S20"/>
    <property type="match status" value="1"/>
</dbReference>
<geneLocation type="chloroplast"/>
<reference key="1">
    <citation type="journal article" date="2007" name="Mol. Genet. Genomics">
        <title>Chloroplast genomes of the diatoms Phaeodactylum tricornutum and Thalassiosira pseudonana: comparison with other plastid genomes of the red lineage.</title>
        <authorList>
            <person name="Oudot-Le Secq M.-P."/>
            <person name="Grimwood J."/>
            <person name="Shapiro H."/>
            <person name="Armbrust E.V."/>
            <person name="Bowler C."/>
            <person name="Green B.R."/>
        </authorList>
    </citation>
    <scope>NUCLEOTIDE SEQUENCE [LARGE SCALE GENOMIC DNA]</scope>
    <source>
        <strain>CCAP 1055/1</strain>
    </source>
</reference>
<evidence type="ECO:0000255" key="1">
    <source>
        <dbReference type="HAMAP-Rule" id="MF_00500"/>
    </source>
</evidence>
<evidence type="ECO:0000305" key="2"/>
<feature type="chain" id="PRO_0000276935" description="Small ribosomal subunit protein bS20c">
    <location>
        <begin position="1"/>
        <end position="93"/>
    </location>
</feature>
<organism>
    <name type="scientific">Phaeodactylum tricornutum (strain CCAP 1055/1)</name>
    <dbReference type="NCBI Taxonomy" id="556484"/>
    <lineage>
        <taxon>Eukaryota</taxon>
        <taxon>Sar</taxon>
        <taxon>Stramenopiles</taxon>
        <taxon>Ochrophyta</taxon>
        <taxon>Bacillariophyta</taxon>
        <taxon>Bacillariophyceae</taxon>
        <taxon>Bacillariophycidae</taxon>
        <taxon>Naviculales</taxon>
        <taxon>Phaeodactylaceae</taxon>
        <taxon>Phaeodactylum</taxon>
    </lineage>
</organism>
<proteinExistence type="inferred from homology"/>